<name>EQXS_GIBF5</name>
<protein>
    <recommendedName>
        <fullName evidence="10">Trichosetin synthetase PKS-NRPS1</fullName>
        <ecNumber evidence="12">2.3.1.-</ecNumber>
        <ecNumber evidence="12">6.3.2.-</ecNumber>
    </recommendedName>
    <alternativeName>
        <fullName evidence="10">Hybrid PKS-NRPS synthetase 1</fullName>
    </alternativeName>
    <alternativeName>
        <fullName evidence="10">Trichosetin biosynthesis cluster protein PKS-NRPS1</fullName>
    </alternativeName>
</protein>
<comment type="function">
    <text evidence="1 9">Hybrid PKS-NRPS synthetase; part of the gene cluster that mediates the biosynthesis of trichosetin, a trans-fused decalin-containing tetramic acid with antimicrobial activity (PubMed:28379186). The PKS module of PKS-NRPS1 together with the enoylreductase (ER) catalyze the formation of the polyketide unit which is then conjugated to L-serine by the condensation domain of the PKS-NRPS1 NRPS module (By similarity). Activity of the Dieckmann cyclase domain (RED) results in release of the Dieckmann product intermediate (By similarity). Diels-Alderase (DA) is involved in endo-selective Diels-Alder cycloaddition to form the decalin ring, leading to the production of N-desmethylequisetin also called trichosetin (By similarity). The cluster does not contain the equisetin N-methyltransferase and consequently, trichosetin is isolated as final product (PubMed:28379186).</text>
</comment>
<comment type="catalytic activity">
    <reaction evidence="1">
        <text>L-serine + 7 malonyl-CoA + acetyl-CoA + 2 S-adenosyl-L-methionine + ATP + 8 NADPH + 11 H(+) = (5S)-3-[(2E,6R,8E,10E,12E)-2,6-dimethyltetradeca-2,8,10,12-tetraenoyl]-5-(hydroxymethyl)pyrrolidine-2,4-dione + AMP + 2 S-adenosyl-L-homocysteine + 7 CO2 + diphosphate + 8 NADP(+) + 8 CoA + 6 H2O</text>
        <dbReference type="Rhea" id="RHEA:67324"/>
        <dbReference type="ChEBI" id="CHEBI:15377"/>
        <dbReference type="ChEBI" id="CHEBI:15378"/>
        <dbReference type="ChEBI" id="CHEBI:16526"/>
        <dbReference type="ChEBI" id="CHEBI:30616"/>
        <dbReference type="ChEBI" id="CHEBI:33019"/>
        <dbReference type="ChEBI" id="CHEBI:33384"/>
        <dbReference type="ChEBI" id="CHEBI:57287"/>
        <dbReference type="ChEBI" id="CHEBI:57288"/>
        <dbReference type="ChEBI" id="CHEBI:57384"/>
        <dbReference type="ChEBI" id="CHEBI:57783"/>
        <dbReference type="ChEBI" id="CHEBI:57856"/>
        <dbReference type="ChEBI" id="CHEBI:58349"/>
        <dbReference type="ChEBI" id="CHEBI:59789"/>
        <dbReference type="ChEBI" id="CHEBI:169938"/>
        <dbReference type="ChEBI" id="CHEBI:456215"/>
    </reaction>
    <physiologicalReaction direction="left-to-right" evidence="1">
        <dbReference type="Rhea" id="RHEA:67325"/>
    </physiologicalReaction>
</comment>
<comment type="pathway">
    <text evidence="12">Mycotoxin biosynthesis.</text>
</comment>
<comment type="induction">
    <text evidence="9">Expression is positively regulated by the trichosetin cluster-specific transcription activator TF22 (PubMed:28379186).</text>
</comment>
<comment type="domain">
    <text evidence="2 12">NRP synthetases are composed of discrete domains (adenylation (A), thiolation (T) or peptidyl carrier protein (PCP) and condensation (C) domains) which when grouped together are referred to as a single module. Each module is responsible for the recognition (via the A domain) and incorporation of a single amino acid into the growing peptide product (By similarity). Thus, an NRP synthetase is generally composed of one or more modules and can terminate in a thioesterase domain (TE) that releases the newly synthesized peptide from the enzyme (By similarity). Occasionally, epimerase (E) domains (responsible for l- to d-amino acid conversion) are present within the NRP synthetase (By similarity). EqxS also contains a polyketide synthase module (PKS) consisting of several catalytic domains including a ketoacyl synthase domain (KS), an acyl transferase domain (AT), a dehydratase domain (DH), a methyltransferase domain (MT), and a ketoreductase domain (KR) (PubMed:28379186). Instead of a thioesterase domain (TE), eqxS finishes with a reductase-like domain (R) for peptide release (PubMed:28379186). EqxS has the following architecture: KS-AT-DH-KR-PCP-C-A-T-R (PubMed:28379186).</text>
</comment>
<comment type="disruption phenotype">
    <text evidence="9">Completely abolishes trichosetin production (PubMed:28379186).</text>
</comment>
<comment type="similarity">
    <text evidence="11">In the C-terminal section; belongs to the NRP synthetase family.</text>
</comment>
<dbReference type="EC" id="2.3.1.-" evidence="12"/>
<dbReference type="EC" id="6.3.2.-" evidence="12"/>
<dbReference type="EMBL" id="HF679025">
    <property type="protein sequence ID" value="CCT65286.1"/>
    <property type="molecule type" value="Genomic_DNA"/>
</dbReference>
<dbReference type="SMR" id="S0DS59"/>
<dbReference type="STRING" id="1279085.S0DS59"/>
<dbReference type="EnsemblFungi" id="CCT65286">
    <property type="protein sequence ID" value="CCT65286"/>
    <property type="gene ID" value="FFUJ_02219"/>
</dbReference>
<dbReference type="VEuPathDB" id="FungiDB:FFUJ_02219"/>
<dbReference type="HOGENOM" id="CLU_000022_37_4_1"/>
<dbReference type="Proteomes" id="UP000016800">
    <property type="component" value="Chromosome 3"/>
</dbReference>
<dbReference type="GO" id="GO:0004315">
    <property type="term" value="F:3-oxoacyl-[acyl-carrier-protein] synthase activity"/>
    <property type="evidence" value="ECO:0007669"/>
    <property type="project" value="InterPro"/>
</dbReference>
<dbReference type="GO" id="GO:0004312">
    <property type="term" value="F:fatty acid synthase activity"/>
    <property type="evidence" value="ECO:0007669"/>
    <property type="project" value="TreeGrafter"/>
</dbReference>
<dbReference type="GO" id="GO:0016874">
    <property type="term" value="F:ligase activity"/>
    <property type="evidence" value="ECO:0007669"/>
    <property type="project" value="UniProtKB-KW"/>
</dbReference>
<dbReference type="GO" id="GO:0008168">
    <property type="term" value="F:methyltransferase activity"/>
    <property type="evidence" value="ECO:0007669"/>
    <property type="project" value="UniProtKB-KW"/>
</dbReference>
<dbReference type="GO" id="GO:0016491">
    <property type="term" value="F:oxidoreductase activity"/>
    <property type="evidence" value="ECO:0007669"/>
    <property type="project" value="UniProtKB-KW"/>
</dbReference>
<dbReference type="GO" id="GO:0031177">
    <property type="term" value="F:phosphopantetheine binding"/>
    <property type="evidence" value="ECO:0007669"/>
    <property type="project" value="InterPro"/>
</dbReference>
<dbReference type="GO" id="GO:0006633">
    <property type="term" value="P:fatty acid biosynthetic process"/>
    <property type="evidence" value="ECO:0007669"/>
    <property type="project" value="InterPro"/>
</dbReference>
<dbReference type="GO" id="GO:0032259">
    <property type="term" value="P:methylation"/>
    <property type="evidence" value="ECO:0007669"/>
    <property type="project" value="UniProtKB-KW"/>
</dbReference>
<dbReference type="GO" id="GO:0009403">
    <property type="term" value="P:toxin biosynthetic process"/>
    <property type="evidence" value="ECO:0007669"/>
    <property type="project" value="UniProtKB-ARBA"/>
</dbReference>
<dbReference type="CDD" id="cd05930">
    <property type="entry name" value="A_NRPS"/>
    <property type="match status" value="1"/>
</dbReference>
<dbReference type="CDD" id="cd02440">
    <property type="entry name" value="AdoMet_MTases"/>
    <property type="match status" value="1"/>
</dbReference>
<dbReference type="CDD" id="cd19532">
    <property type="entry name" value="C_PKS-NRPS"/>
    <property type="match status" value="1"/>
</dbReference>
<dbReference type="CDD" id="cd00833">
    <property type="entry name" value="PKS"/>
    <property type="match status" value="1"/>
</dbReference>
<dbReference type="Gene3D" id="3.30.300.30">
    <property type="match status" value="1"/>
</dbReference>
<dbReference type="Gene3D" id="3.30.70.3290">
    <property type="match status" value="1"/>
</dbReference>
<dbReference type="Gene3D" id="3.40.47.10">
    <property type="match status" value="1"/>
</dbReference>
<dbReference type="Gene3D" id="1.10.1200.10">
    <property type="entry name" value="ACP-like"/>
    <property type="match status" value="1"/>
</dbReference>
<dbReference type="Gene3D" id="3.30.559.10">
    <property type="entry name" value="Chloramphenicol acetyltransferase-like domain"/>
    <property type="match status" value="1"/>
</dbReference>
<dbReference type="Gene3D" id="3.40.366.10">
    <property type="entry name" value="Malonyl-Coenzyme A Acyl Carrier Protein, domain 2"/>
    <property type="match status" value="1"/>
</dbReference>
<dbReference type="Gene3D" id="3.40.50.12780">
    <property type="entry name" value="N-terminal domain of ligase-like"/>
    <property type="match status" value="1"/>
</dbReference>
<dbReference type="Gene3D" id="3.40.50.720">
    <property type="entry name" value="NAD(P)-binding Rossmann-like Domain"/>
    <property type="match status" value="3"/>
</dbReference>
<dbReference type="Gene3D" id="3.30.559.30">
    <property type="entry name" value="Nonribosomal peptide synthetase, condensation domain"/>
    <property type="match status" value="1"/>
</dbReference>
<dbReference type="Gene3D" id="3.10.129.110">
    <property type="entry name" value="Polyketide synthase dehydratase"/>
    <property type="match status" value="1"/>
</dbReference>
<dbReference type="Gene3D" id="3.40.50.150">
    <property type="entry name" value="Vaccinia Virus protein VP39"/>
    <property type="match status" value="1"/>
</dbReference>
<dbReference type="InterPro" id="IPR001227">
    <property type="entry name" value="Ac_transferase_dom_sf"/>
</dbReference>
<dbReference type="InterPro" id="IPR036736">
    <property type="entry name" value="ACP-like_sf"/>
</dbReference>
<dbReference type="InterPro" id="IPR014043">
    <property type="entry name" value="Acyl_transferase_dom"/>
</dbReference>
<dbReference type="InterPro" id="IPR016035">
    <property type="entry name" value="Acyl_Trfase/lysoPLipase"/>
</dbReference>
<dbReference type="InterPro" id="IPR045851">
    <property type="entry name" value="AMP-bd_C_sf"/>
</dbReference>
<dbReference type="InterPro" id="IPR020845">
    <property type="entry name" value="AMP-binding_CS"/>
</dbReference>
<dbReference type="InterPro" id="IPR000873">
    <property type="entry name" value="AMP-dep_synth/lig_dom"/>
</dbReference>
<dbReference type="InterPro" id="IPR042099">
    <property type="entry name" value="ANL_N_sf"/>
</dbReference>
<dbReference type="InterPro" id="IPR023213">
    <property type="entry name" value="CAT-like_dom_sf"/>
</dbReference>
<dbReference type="InterPro" id="IPR001242">
    <property type="entry name" value="Condensatn"/>
</dbReference>
<dbReference type="InterPro" id="IPR013120">
    <property type="entry name" value="Far_NAD-bd"/>
</dbReference>
<dbReference type="InterPro" id="IPR018201">
    <property type="entry name" value="Ketoacyl_synth_AS"/>
</dbReference>
<dbReference type="InterPro" id="IPR014031">
    <property type="entry name" value="Ketoacyl_synth_C"/>
</dbReference>
<dbReference type="InterPro" id="IPR014030">
    <property type="entry name" value="Ketoacyl_synth_N"/>
</dbReference>
<dbReference type="InterPro" id="IPR016036">
    <property type="entry name" value="Malonyl_transacylase_ACP-bd"/>
</dbReference>
<dbReference type="InterPro" id="IPR013217">
    <property type="entry name" value="Methyltransf_12"/>
</dbReference>
<dbReference type="InterPro" id="IPR036291">
    <property type="entry name" value="NAD(P)-bd_dom_sf"/>
</dbReference>
<dbReference type="InterPro" id="IPR020841">
    <property type="entry name" value="PKS_Beta-ketoAc_synthase_dom"/>
</dbReference>
<dbReference type="InterPro" id="IPR042104">
    <property type="entry name" value="PKS_dehydratase_sf"/>
</dbReference>
<dbReference type="InterPro" id="IPR020807">
    <property type="entry name" value="PKS_DH"/>
</dbReference>
<dbReference type="InterPro" id="IPR049551">
    <property type="entry name" value="PKS_DH_C"/>
</dbReference>
<dbReference type="InterPro" id="IPR049552">
    <property type="entry name" value="PKS_DH_N"/>
</dbReference>
<dbReference type="InterPro" id="IPR013968">
    <property type="entry name" value="PKS_KR"/>
</dbReference>
<dbReference type="InterPro" id="IPR049900">
    <property type="entry name" value="PKS_mFAS_DH"/>
</dbReference>
<dbReference type="InterPro" id="IPR050091">
    <property type="entry name" value="PKS_NRPS_Biosynth_Enz"/>
</dbReference>
<dbReference type="InterPro" id="IPR020806">
    <property type="entry name" value="PKS_PP-bd"/>
</dbReference>
<dbReference type="InterPro" id="IPR009081">
    <property type="entry name" value="PP-bd_ACP"/>
</dbReference>
<dbReference type="InterPro" id="IPR029063">
    <property type="entry name" value="SAM-dependent_MTases_sf"/>
</dbReference>
<dbReference type="InterPro" id="IPR016039">
    <property type="entry name" value="Thiolase-like"/>
</dbReference>
<dbReference type="PANTHER" id="PTHR43775">
    <property type="entry name" value="FATTY ACID SYNTHASE"/>
    <property type="match status" value="1"/>
</dbReference>
<dbReference type="PANTHER" id="PTHR43775:SF20">
    <property type="entry name" value="HYBRID PKS-NRPS SYNTHETASE APDA"/>
    <property type="match status" value="1"/>
</dbReference>
<dbReference type="Pfam" id="PF00698">
    <property type="entry name" value="Acyl_transf_1"/>
    <property type="match status" value="1"/>
</dbReference>
<dbReference type="Pfam" id="PF00501">
    <property type="entry name" value="AMP-binding"/>
    <property type="match status" value="1"/>
</dbReference>
<dbReference type="Pfam" id="PF00668">
    <property type="entry name" value="Condensation"/>
    <property type="match status" value="1"/>
</dbReference>
<dbReference type="Pfam" id="PF22621">
    <property type="entry name" value="CurL-like_PKS_C"/>
    <property type="match status" value="1"/>
</dbReference>
<dbReference type="Pfam" id="PF00109">
    <property type="entry name" value="ketoacyl-synt"/>
    <property type="match status" value="1"/>
</dbReference>
<dbReference type="Pfam" id="PF02801">
    <property type="entry name" value="Ketoacyl-synt_C"/>
    <property type="match status" value="1"/>
</dbReference>
<dbReference type="Pfam" id="PF08659">
    <property type="entry name" value="KR"/>
    <property type="match status" value="1"/>
</dbReference>
<dbReference type="Pfam" id="PF08242">
    <property type="entry name" value="Methyltransf_12"/>
    <property type="match status" value="1"/>
</dbReference>
<dbReference type="Pfam" id="PF07993">
    <property type="entry name" value="NAD_binding_4"/>
    <property type="match status" value="1"/>
</dbReference>
<dbReference type="Pfam" id="PF21089">
    <property type="entry name" value="PKS_DH_N"/>
    <property type="match status" value="1"/>
</dbReference>
<dbReference type="Pfam" id="PF00550">
    <property type="entry name" value="PP-binding"/>
    <property type="match status" value="1"/>
</dbReference>
<dbReference type="Pfam" id="PF14765">
    <property type="entry name" value="PS-DH"/>
    <property type="match status" value="1"/>
</dbReference>
<dbReference type="SMART" id="SM00827">
    <property type="entry name" value="PKS_AT"/>
    <property type="match status" value="1"/>
</dbReference>
<dbReference type="SMART" id="SM00826">
    <property type="entry name" value="PKS_DH"/>
    <property type="match status" value="1"/>
</dbReference>
<dbReference type="SMART" id="SM00822">
    <property type="entry name" value="PKS_KR"/>
    <property type="match status" value="1"/>
</dbReference>
<dbReference type="SMART" id="SM00825">
    <property type="entry name" value="PKS_KS"/>
    <property type="match status" value="1"/>
</dbReference>
<dbReference type="SMART" id="SM00823">
    <property type="entry name" value="PKS_PP"/>
    <property type="match status" value="2"/>
</dbReference>
<dbReference type="SUPFAM" id="SSF56801">
    <property type="entry name" value="Acetyl-CoA synthetase-like"/>
    <property type="match status" value="1"/>
</dbReference>
<dbReference type="SUPFAM" id="SSF47336">
    <property type="entry name" value="ACP-like"/>
    <property type="match status" value="2"/>
</dbReference>
<dbReference type="SUPFAM" id="SSF52777">
    <property type="entry name" value="CoA-dependent acyltransferases"/>
    <property type="match status" value="2"/>
</dbReference>
<dbReference type="SUPFAM" id="SSF52151">
    <property type="entry name" value="FabD/lysophospholipase-like"/>
    <property type="match status" value="1"/>
</dbReference>
<dbReference type="SUPFAM" id="SSF51735">
    <property type="entry name" value="NAD(P)-binding Rossmann-fold domains"/>
    <property type="match status" value="2"/>
</dbReference>
<dbReference type="SUPFAM" id="SSF55048">
    <property type="entry name" value="Probable ACP-binding domain of malonyl-CoA ACP transacylase"/>
    <property type="match status" value="1"/>
</dbReference>
<dbReference type="SUPFAM" id="SSF53335">
    <property type="entry name" value="S-adenosyl-L-methionine-dependent methyltransferases"/>
    <property type="match status" value="1"/>
</dbReference>
<dbReference type="SUPFAM" id="SSF53901">
    <property type="entry name" value="Thiolase-like"/>
    <property type="match status" value="1"/>
</dbReference>
<dbReference type="PROSITE" id="PS00455">
    <property type="entry name" value="AMP_BINDING"/>
    <property type="match status" value="1"/>
</dbReference>
<dbReference type="PROSITE" id="PS50075">
    <property type="entry name" value="CARRIER"/>
    <property type="match status" value="2"/>
</dbReference>
<dbReference type="PROSITE" id="PS00606">
    <property type="entry name" value="KS3_1"/>
    <property type="match status" value="1"/>
</dbReference>
<dbReference type="PROSITE" id="PS52004">
    <property type="entry name" value="KS3_2"/>
    <property type="match status" value="1"/>
</dbReference>
<dbReference type="PROSITE" id="PS52019">
    <property type="entry name" value="PKS_MFAS_DH"/>
    <property type="match status" value="1"/>
</dbReference>
<sequence>MSDNEPIAIIGSACRFPGDSSSPSKLWDLLKSPRDLLTKVPPNRYNADAFYHADSKHHGTTNVRHSYFLNEDPARFDNNFFNIQPGEAEAIDPQQRLLMEVVYQGLCASGQTIEGLRGSPTAVYVGVMCDDWSGIITRDLEVFPQYGATGMARSIMSNRISYFFDWHGPSMTIDTACSSSLVAVHQAIQTLRSGESEVAIAAGANLILTPGRSKMWDQDVNGYARGEGIAAVVLKPLSAAIRDNDHIDCIIRATGVNQDGRTPGLTMPSATAQADLIRSTYARAGLDINKPEDRPQFFHAHGTGTPAGDPREAEAIYRAFYSDVKDDKLYVGSIKTVLGHTEGTAGLASLIGTALAIQNKTIPPNMHFDVLNPKIKPFYDNLEVPTKAIAWPETHKGQPRRASINSFGFGGTNAHAIIEAYEPATTDSAPGPLFSPLTFSASSEPSLRSLLSSYSDHLKSNPDLSLKDLAYTLQTRRSTLAYRVAITASDVEDAYTQLDTIGNGEQSSTIGVRQVTKASPKIMGVLTGQGAQWPRMGARLVEESAFASQRLFELDEALSSLPKDDRPSWTLREMILADSKSSRIAEAAISQPLCTAVQVVLVDLLRQAGVELSSVVGHSSGEIGAAYAAGLLTARDAIRVAYYRGLYAKLAQSPNGRKGAMMAVGTTFDDASEFCELDAFQGRIQVAARNSSSSITLSGDEDAIVEAIETFKDEGKFARQLKVDTAYHSAHVLPCAKPYLDAMERCQIESANPTSTKWYSSVHDGQAMTAELLTPQYWVDNMTSAVLFSPAVEHAWREGGPYDVIIEVGPHPVLKTPCLDTLEDMTGDRPPYSGVLGREKDDIQQFASGLGFIWTQLGAGSATFERFEKVASDSKSIPSFIHDLPNYPFDHARQFMSMSRVSGWYNSMQEAPHPILGRRCHDRETSQTIQWRNVLNPKEIPWLHGHQIQGQIIFPATGYISMAIEAVNIIAGSDLGLVTIEDLRIGRALAFSDDDASVESMFDLRIISRSEKEIEAEFSCYSGLPQNHTTSMVLNATAHVKASLSVPTAQKLPNLKIDDFNLRKVEVDRFYDFLGRLGYNYSWPFHGTTSIRRKANYATGTLEDQSGSEWEDQLLVHPGMLDTSLQTTFAAFCCPGDERMWALHLPTSFRSIVVNPYFTSAGIGKQKSFQYQSVAIQERKASKVIVELNLLSEETGDTFLQIEGMELVPFSPATPENDAVLFSRFDYRLASPDGELTAAEYSFRDEDYKMALDSERIAFYYLRRLVETITPEDKANTLPHYRHLVEWAAHVVPQVIDGRNPHIPSSAQKDTHEDIQNILKKHYERVDVRLLESVGENLPQVIRENGNILEHMTKDGMLDDVYEEGFGLDLVNKYIAHMTAQIAHRYPRMNILEIGAGTGGSTREILPRLGSAFSTYTYTDVSGGFFDTAQDRFKDYAERMIFKTFDMNISPGSQGFTEGTYDLVIASNVLHATLELEDMMKHVRSFLKPGGFLIILETVNNDCLRVGLPMGSLPGWWLGAEHGRRWGPTLTLPQWDSLLWKCGFGGIDTTTPPVHKILPGHVFCAQALDDRVEILRSPLSHLSDLPETKSTELVIVGGETLKVHRMCEQISRRLKPKYASIARFNSIEELNTSGLADSCAVVSLTELDEPLFANMTSDKLDALKTLWKQGGSILWVTSGARDENPYSYMTTGVGRCMRFEYPNITLQALDIKAMTDRTPGLVAEHLLRLELLDKWSKELRPEELLWSLEPEIYVDDDTTIVPRLYPYESGNARYNAERRNIVEDADLQTDRVIFVENEGKWEVQHASPLHIPQELPFASKMKTIRITHFSPATINFAPGVSLMVCAGIDAASGERLLAVTHVAESPISVPADWCIPLGELDGVDTLANVSAFLIASSILKHVATEETLVVHGAPSRLASALEGLAKESSITVFLTTSERANKNGWQYIDSHLPERVIKASIPRSATKFINLSQDANMGETGRAISACLPRYCEVINTERLFIWGKLIRESVSKEDISIVFNRAFYETKSLSSTATDARLISLQDVSGVSAAEVRFAVVDCIDSSVKASIRPIDDGRIFQADKTFLLIGLSGELGQSLGKWMVEQGARNIVLTSRRPNVSQHFLDEMATMGATVKALPMDVTNRDSLHACVDTIQKTLPPIAGVVNGAMVLRDALFENMPYEDFMKVLSPKVLGSQLLDELFYDTPLDFFIFFSSTTAVMGNSGQSNYIAGNMFMNALAAQRKKRGVAASSIDISSIIGLGYVERAEDLSEDTFIKMGYKPMSEQDLQKLFAEAIVLGRPECDEVCELVTGVTPIYTDAQASDQYLKDVKFGHFLMERLDTQAYTGKTSTVPVRVQLADVKTKADAVAIIKGMFSLLTPVIIADLERFLHFEQGVDSLMAVEVRSWFIKELDIDIPVLKILGGMSVPDLIEESLNLISDSILDVSSLEAGSTPTTQPPKPTLQIARVTPPESSHGTSDDSKQQTGSDSSRSPIDTPLTSMEIQEPAKAEDSTDNSTPLKTFPNELSSIMSYGQAGFWFLNDYLVNKRAFNMAVMLKLTGQVRVQALEKAVNLVAERHEVLRTRFFWGDDGDERTPLQGINPADLKLTTKKVADESEAGMELKKLHDEEWDLSRGEGVKITLLSLSDNVHFLLLGMHHIYIDGYSFSVFFKDLEVAYTKNTLPSLPVESQYRSFALQQRQMYANGNLTKSIEYYRRSFPKEFSPIQLFPFALTPARQFANDYSQHEAKMSIDPELAPKVRQLARVNRSTSFHVYLAALELLLFTLLPNIEEVFIGIADANRGDKKFMGSLGFFLNLLPLRFRRKRRGTQLSSIIQTARDTAYGALQHSQLPFDVLLRELNVPRSDKYTPIFQVFMDYRQVVQERSSWGGCKLHGEKWHNAGTGYDIALEVNENITTDTLLGLRLQKQLYSEEHTALLLRSYLSVLEYMVQGTNKAADTVPPWSKDDIQVALDAGKAPEFQPKWQSTISHHIDQTIQANSTKVALKDGNGTVLTYEQMGNRVNSITQALIDAGTTQGTVVGVFQEPSSDWICSLLAIFKAGAVYVPLDLRNSIPRLASIVKASRPSLIITDHTTDDKVELIGAKYITQLQLSKVVDQEFKEPNRAKVGSLAVILFTSGSTGEPKGLMMTHTNLMSYAEVSSKTFSKPDESLMVLQQSPFSFDFSLDQTVAALANGGCLCIVPASKRGDPDEISKIMVKEGVTYTTATPSEYDLWLRYSTSTLRQCTSWKYAFSGGEAMSHKLAREFGTLSLKNLHVFNGYGPAETTILSHRIDLQYTDPDLPDPLPAGCPMPGFSVCIVDEKMRPVPLGVQGEIVLGGPCIVSGYLSMPDATKDKFLPDTFFGTSGKVYRSGDRGRLCHDGLLFCDGRLEDSNMIKLRGFRVELDEVEKTIISHSAGTLSHAVVTLRGTEEGRYLAAHVVFAPEFPEQNRESIMKTLRQTLPLPPYMRPSVFQILADIPRTAHLKVDRKAIQEMPVQISASHDSGTLTVAEQRLSELWRRVLPLDPGSLSPESDFFLIGGNSILLVKLQALLRQTFKTAPKLVALMGASTLGTMAVVLESCGSVGVIDWDQETALPNGLQGAVALRPVNKITDITVLLTGSAGYLGRHLVPALVEDPRVTRVHCLVRSVNNEKLSTSSSSKVRVIESDLSKPGLGLSASTYSRLAEETDVIIHSAANRSFWDRYEVLKPDNLDSVKELVRFAASSGRSIPLHFLSSGAVKIYDGDVVTPPTDGSDGYVATKWASETFLRNAAGSIGLPVYAHRPTVSSKAQTKTDQASIVDELFSIVKFLGVRPSFEGVTGSVDVLPTGDIVKAIQDSVLSSSAGGEGYNVLQHEAHQRAFVEDFAGVVRADDSLNKLPSISILDWFGKAKKAGFSYFLASQNLVMGEGEGHLVSRR</sequence>
<feature type="chain" id="PRO_0000443987" description="Trichosetin synthetase PKS-NRPS1">
    <location>
        <begin position="1"/>
        <end position="3914"/>
    </location>
</feature>
<feature type="domain" description="Ketosynthase family 3 (KS3)" evidence="6">
    <location>
        <begin position="4"/>
        <end position="420"/>
    </location>
</feature>
<feature type="domain" description="PKS/mFAS DH" evidence="7">
    <location>
        <begin position="913"/>
        <end position="1216"/>
    </location>
</feature>
<feature type="domain" description="Carrier 1" evidence="5">
    <location>
        <begin position="2356"/>
        <end position="2436"/>
    </location>
</feature>
<feature type="domain" description="Carrier 2" evidence="5">
    <location>
        <begin position="3502"/>
        <end position="3579"/>
    </location>
</feature>
<feature type="region of interest" description="Malonyl-CoA:ACP transacylase (MAT) domain" evidence="3 4">
    <location>
        <begin position="525"/>
        <end position="847"/>
    </location>
</feature>
<feature type="region of interest" description="Dehydratase (DH) domain" evidence="3 4">
    <location>
        <begin position="913"/>
        <end position="1214"/>
    </location>
</feature>
<feature type="region of interest" description="N-terminal hotdog fold" evidence="7">
    <location>
        <begin position="913"/>
        <end position="1047"/>
    </location>
</feature>
<feature type="region of interest" description="C-terminal hotdog fold" evidence="7">
    <location>
        <begin position="1062"/>
        <end position="1216"/>
    </location>
</feature>
<feature type="region of interest" description="Methyltransferase (MT) domain" evidence="3 4">
    <location>
        <begin position="1364"/>
        <end position="1593"/>
    </location>
</feature>
<feature type="region of interest" description="Ketoreductase (KR) domain" evidence="3 4">
    <location>
        <begin position="2083"/>
        <end position="2255"/>
    </location>
</feature>
<feature type="region of interest" description="Disordered" evidence="8">
    <location>
        <begin position="2447"/>
        <end position="2518"/>
    </location>
</feature>
<feature type="region of interest" description="Condensation (C) domain" evidence="3 4">
    <location>
        <begin position="2529"/>
        <end position="2956"/>
    </location>
</feature>
<feature type="region of interest" description="Adenylation (A) (KR) domain" evidence="3 4">
    <location>
        <begin position="2991"/>
        <end position="3388"/>
    </location>
</feature>
<feature type="region of interest" description="Reductase (RED) domain" evidence="3 4">
    <location>
        <begin position="3615"/>
        <end position="3831"/>
    </location>
</feature>
<feature type="compositionally biased region" description="Polar residues" evidence="8">
    <location>
        <begin position="2481"/>
        <end position="2500"/>
    </location>
</feature>
<feature type="active site" description="For beta-ketoacyl synthase activity" evidence="6">
    <location>
        <position position="177"/>
    </location>
</feature>
<feature type="active site" description="For beta-ketoacyl synthase activity" evidence="6">
    <location>
        <position position="301"/>
    </location>
</feature>
<feature type="active site" description="For beta-ketoacyl synthase activity" evidence="6">
    <location>
        <position position="340"/>
    </location>
</feature>
<feature type="active site" description="Proton acceptor; for dehydratase activity" evidence="7">
    <location>
        <position position="946"/>
    </location>
</feature>
<feature type="active site" description="Proton donor; for dehydratase activity" evidence="7">
    <location>
        <position position="1122"/>
    </location>
</feature>
<feature type="modified residue" description="O-(pantetheine 4'-phosphoryl)serine" evidence="5">
    <location>
        <position position="2396"/>
    </location>
</feature>
<feature type="modified residue" description="O-(pantetheine 4'-phosphoryl)serine" evidence="5">
    <location>
        <position position="3539"/>
    </location>
</feature>
<proteinExistence type="evidence at transcript level"/>
<evidence type="ECO:0000250" key="1">
    <source>
        <dbReference type="UniProtKB" id="A0A0E4AZP0"/>
    </source>
</evidence>
<evidence type="ECO:0000250" key="2">
    <source>
        <dbReference type="UniProtKB" id="Q4WAZ9"/>
    </source>
</evidence>
<evidence type="ECO:0000250" key="3">
    <source>
        <dbReference type="UniProtKB" id="S4W172"/>
    </source>
</evidence>
<evidence type="ECO:0000255" key="4"/>
<evidence type="ECO:0000255" key="5">
    <source>
        <dbReference type="PROSITE-ProRule" id="PRU00258"/>
    </source>
</evidence>
<evidence type="ECO:0000255" key="6">
    <source>
        <dbReference type="PROSITE-ProRule" id="PRU01348"/>
    </source>
</evidence>
<evidence type="ECO:0000255" key="7">
    <source>
        <dbReference type="PROSITE-ProRule" id="PRU01363"/>
    </source>
</evidence>
<evidence type="ECO:0000256" key="8">
    <source>
        <dbReference type="SAM" id="MobiDB-lite"/>
    </source>
</evidence>
<evidence type="ECO:0000269" key="9">
    <source>
    </source>
</evidence>
<evidence type="ECO:0000303" key="10">
    <source>
    </source>
</evidence>
<evidence type="ECO:0000305" key="11"/>
<evidence type="ECO:0000305" key="12">
    <source>
    </source>
</evidence>
<gene>
    <name evidence="10" type="primary">PKS-NRPS1</name>
    <name type="ORF">FFUJ_02219</name>
</gene>
<organism>
    <name type="scientific">Gibberella fujikuroi (strain CBS 195.34 / IMI 58289 / NRRL A-6831)</name>
    <name type="common">Bakanae and foot rot disease fungus</name>
    <name type="synonym">Fusarium fujikuroi</name>
    <dbReference type="NCBI Taxonomy" id="1279085"/>
    <lineage>
        <taxon>Eukaryota</taxon>
        <taxon>Fungi</taxon>
        <taxon>Dikarya</taxon>
        <taxon>Ascomycota</taxon>
        <taxon>Pezizomycotina</taxon>
        <taxon>Sordariomycetes</taxon>
        <taxon>Hypocreomycetidae</taxon>
        <taxon>Hypocreales</taxon>
        <taxon>Nectriaceae</taxon>
        <taxon>Fusarium</taxon>
        <taxon>Fusarium fujikuroi species complex</taxon>
    </lineage>
</organism>
<keyword id="KW-0436">Ligase</keyword>
<keyword id="KW-0489">Methyltransferase</keyword>
<keyword id="KW-0511">Multifunctional enzyme</keyword>
<keyword id="KW-0560">Oxidoreductase</keyword>
<keyword id="KW-0596">Phosphopantetheine</keyword>
<keyword id="KW-0597">Phosphoprotein</keyword>
<keyword id="KW-1185">Reference proteome</keyword>
<keyword id="KW-0677">Repeat</keyword>
<keyword id="KW-0808">Transferase</keyword>
<reference key="1">
    <citation type="journal article" date="2013" name="PLoS Pathog.">
        <title>Deciphering the cryptic genome: genome-wide analyses of the rice pathogen Fusarium fujikuroi reveal complex regulation of secondary metabolism and novel metabolites.</title>
        <authorList>
            <person name="Wiemann P."/>
            <person name="Sieber C.M.K."/>
            <person name="von Bargen K.W."/>
            <person name="Studt L."/>
            <person name="Niehaus E.-M."/>
            <person name="Espino J.J."/>
            <person name="Huss K."/>
            <person name="Michielse C.B."/>
            <person name="Albermann S."/>
            <person name="Wagner D."/>
            <person name="Bergner S.V."/>
            <person name="Connolly L.R."/>
            <person name="Fischer A."/>
            <person name="Reuter G."/>
            <person name="Kleigrewe K."/>
            <person name="Bald T."/>
            <person name="Wingfield B.D."/>
            <person name="Ophir R."/>
            <person name="Freeman S."/>
            <person name="Hippler M."/>
            <person name="Smith K.M."/>
            <person name="Brown D.W."/>
            <person name="Proctor R.H."/>
            <person name="Muensterkoetter M."/>
            <person name="Freitag M."/>
            <person name="Humpf H.-U."/>
            <person name="Gueldener U."/>
            <person name="Tudzynski B."/>
        </authorList>
    </citation>
    <scope>NUCLEOTIDE SEQUENCE [LARGE SCALE GENOMIC DNA]</scope>
    <source>
        <strain>CBS 195.34 / IMI 58289 / NRRL A-6831</strain>
    </source>
</reference>
<reference key="2">
    <citation type="journal article" date="2017" name="Toxins">
        <title>Establishment of the inducible Tet-On system for the activation of the silent trichosetin gene cluster in Fusarium fujikuroi.</title>
        <authorList>
            <person name="Janevska S."/>
            <person name="Arndt B."/>
            <person name="Baumann L."/>
            <person name="Apken L.H."/>
            <person name="Mauriz Marques L.M."/>
            <person name="Humpf H.U."/>
            <person name="Tudzynski B."/>
        </authorList>
    </citation>
    <scope>FUNCTION</scope>
    <scope>INDUCTION</scope>
    <scope>DISRUPTION PHENOTYPE</scope>
</reference>
<accession>S0DS59</accession>